<organism>
    <name type="scientific">Thermodesulfovibrio yellowstonii (strain ATCC 51303 / DSM 11347 / YP87)</name>
    <dbReference type="NCBI Taxonomy" id="289376"/>
    <lineage>
        <taxon>Bacteria</taxon>
        <taxon>Pseudomonadati</taxon>
        <taxon>Nitrospirota</taxon>
        <taxon>Thermodesulfovibrionia</taxon>
        <taxon>Thermodesulfovibrionales</taxon>
        <taxon>Thermodesulfovibrionaceae</taxon>
        <taxon>Thermodesulfovibrio</taxon>
    </lineage>
</organism>
<gene>
    <name evidence="1" type="primary">purM</name>
    <name type="ordered locus">THEYE_A0887</name>
</gene>
<evidence type="ECO:0000255" key="1">
    <source>
        <dbReference type="HAMAP-Rule" id="MF_00741"/>
    </source>
</evidence>
<comment type="catalytic activity">
    <reaction evidence="1">
        <text>2-formamido-N(1)-(5-O-phospho-beta-D-ribosyl)acetamidine + ATP = 5-amino-1-(5-phospho-beta-D-ribosyl)imidazole + ADP + phosphate + H(+)</text>
        <dbReference type="Rhea" id="RHEA:23032"/>
        <dbReference type="ChEBI" id="CHEBI:15378"/>
        <dbReference type="ChEBI" id="CHEBI:30616"/>
        <dbReference type="ChEBI" id="CHEBI:43474"/>
        <dbReference type="ChEBI" id="CHEBI:137981"/>
        <dbReference type="ChEBI" id="CHEBI:147287"/>
        <dbReference type="ChEBI" id="CHEBI:456216"/>
        <dbReference type="EC" id="6.3.3.1"/>
    </reaction>
</comment>
<comment type="pathway">
    <text evidence="1">Purine metabolism; IMP biosynthesis via de novo pathway; 5-amino-1-(5-phospho-D-ribosyl)imidazole from N(2)-formyl-N(1)-(5-phospho-D-ribosyl)glycinamide: step 2/2.</text>
</comment>
<comment type="subcellular location">
    <subcellularLocation>
        <location evidence="1">Cytoplasm</location>
    </subcellularLocation>
</comment>
<comment type="similarity">
    <text evidence="1">Belongs to the AIR synthase family.</text>
</comment>
<reference key="1">
    <citation type="submission" date="2008-08" db="EMBL/GenBank/DDBJ databases">
        <title>The complete genome sequence of Thermodesulfovibrio yellowstonii strain ATCC 51303 / DSM 11347 / YP87.</title>
        <authorList>
            <person name="Dodson R.J."/>
            <person name="Durkin A.S."/>
            <person name="Wu M."/>
            <person name="Eisen J."/>
            <person name="Sutton G."/>
        </authorList>
    </citation>
    <scope>NUCLEOTIDE SEQUENCE [LARGE SCALE GENOMIC DNA]</scope>
    <source>
        <strain>ATCC 51303 / DSM 11347 / YP87</strain>
    </source>
</reference>
<name>PUR5_THEYD</name>
<keyword id="KW-0067">ATP-binding</keyword>
<keyword id="KW-0963">Cytoplasm</keyword>
<keyword id="KW-0436">Ligase</keyword>
<keyword id="KW-0547">Nucleotide-binding</keyword>
<keyword id="KW-0658">Purine biosynthesis</keyword>
<keyword id="KW-1185">Reference proteome</keyword>
<proteinExistence type="inferred from homology"/>
<accession>B5YKG0</accession>
<feature type="chain" id="PRO_1000193054" description="Phosphoribosylformylglycinamidine cyclo-ligase">
    <location>
        <begin position="1"/>
        <end position="343"/>
    </location>
</feature>
<protein>
    <recommendedName>
        <fullName evidence="1">Phosphoribosylformylglycinamidine cyclo-ligase</fullName>
        <ecNumber evidence="1">6.3.3.1</ecNumber>
    </recommendedName>
    <alternativeName>
        <fullName evidence="1">AIR synthase</fullName>
    </alternativeName>
    <alternativeName>
        <fullName evidence="1">AIRS</fullName>
    </alternativeName>
    <alternativeName>
        <fullName evidence="1">Phosphoribosyl-aminoimidazole synthetase</fullName>
    </alternativeName>
</protein>
<sequence>MSITYKKAGVDIDEADKFVSMISPIVKTTFRKEVLTEIGLFAGLFKFDVKKYKEPVLVSGTDGVGTKLKIAFEADKHDTVGIDLVAMCVNDILTVGAEPLFFLDYFATGKLNAAKATEVIKGIVQGCKEAGCALIGGETAELPRFYKKNEYDLAGFAVGVVDRKEIIDGSSIKEGDVFIGVASSGLHSNGFSLARKVLFDIGKLRIDQYIPELNCILAKELLKPTEIYVKAYFALKDKVKVKGMAHITGGGIPGNLSRILPKNITAILDKNSWTVPSIFHLIKNIGKINEAEMFKVFNMGIGYIFVVEQNEIQKSLAILNKKGYKAYLIGKASKGGEDKITIK</sequence>
<dbReference type="EC" id="6.3.3.1" evidence="1"/>
<dbReference type="EMBL" id="CP001147">
    <property type="protein sequence ID" value="ACI21011.1"/>
    <property type="molecule type" value="Genomic_DNA"/>
</dbReference>
<dbReference type="RefSeq" id="WP_012545739.1">
    <property type="nucleotide sequence ID" value="NC_011296.1"/>
</dbReference>
<dbReference type="RefSeq" id="YP_002248725.1">
    <property type="nucleotide sequence ID" value="NC_011296.1"/>
</dbReference>
<dbReference type="SMR" id="B5YKG0"/>
<dbReference type="FunCoup" id="B5YKG0">
    <property type="interactions" value="462"/>
</dbReference>
<dbReference type="STRING" id="289376.THEYE_A0887"/>
<dbReference type="EnsemblBacteria" id="ACI21011">
    <property type="protein sequence ID" value="ACI21011"/>
    <property type="gene ID" value="THEYE_A0887"/>
</dbReference>
<dbReference type="KEGG" id="tye:THEYE_A0887"/>
<dbReference type="PATRIC" id="fig|289376.4.peg.874"/>
<dbReference type="eggNOG" id="COG0150">
    <property type="taxonomic scope" value="Bacteria"/>
</dbReference>
<dbReference type="HOGENOM" id="CLU_047116_0_0_0"/>
<dbReference type="InParanoid" id="B5YKG0"/>
<dbReference type="OrthoDB" id="9802507at2"/>
<dbReference type="UniPathway" id="UPA00074">
    <property type="reaction ID" value="UER00129"/>
</dbReference>
<dbReference type="Proteomes" id="UP000000718">
    <property type="component" value="Chromosome"/>
</dbReference>
<dbReference type="GO" id="GO:0005829">
    <property type="term" value="C:cytosol"/>
    <property type="evidence" value="ECO:0000318"/>
    <property type="project" value="GO_Central"/>
</dbReference>
<dbReference type="GO" id="GO:0005524">
    <property type="term" value="F:ATP binding"/>
    <property type="evidence" value="ECO:0007669"/>
    <property type="project" value="UniProtKB-KW"/>
</dbReference>
<dbReference type="GO" id="GO:0004637">
    <property type="term" value="F:phosphoribosylamine-glycine ligase activity"/>
    <property type="evidence" value="ECO:0000318"/>
    <property type="project" value="GO_Central"/>
</dbReference>
<dbReference type="GO" id="GO:0004641">
    <property type="term" value="F:phosphoribosylformylglycinamidine cyclo-ligase activity"/>
    <property type="evidence" value="ECO:0000318"/>
    <property type="project" value="GO_Central"/>
</dbReference>
<dbReference type="GO" id="GO:0006189">
    <property type="term" value="P:'de novo' IMP biosynthetic process"/>
    <property type="evidence" value="ECO:0007669"/>
    <property type="project" value="UniProtKB-UniRule"/>
</dbReference>
<dbReference type="GO" id="GO:0046084">
    <property type="term" value="P:adenine biosynthetic process"/>
    <property type="evidence" value="ECO:0000318"/>
    <property type="project" value="GO_Central"/>
</dbReference>
<dbReference type="GO" id="GO:0006164">
    <property type="term" value="P:purine nucleotide biosynthetic process"/>
    <property type="evidence" value="ECO:0000318"/>
    <property type="project" value="GO_Central"/>
</dbReference>
<dbReference type="CDD" id="cd02196">
    <property type="entry name" value="PurM"/>
    <property type="match status" value="1"/>
</dbReference>
<dbReference type="FunFam" id="3.30.1330.10:FF:000001">
    <property type="entry name" value="Phosphoribosylformylglycinamidine cyclo-ligase"/>
    <property type="match status" value="1"/>
</dbReference>
<dbReference type="FunFam" id="3.90.650.10:FF:000011">
    <property type="entry name" value="Phosphoribosylformylglycinamidine cyclo-ligase"/>
    <property type="match status" value="1"/>
</dbReference>
<dbReference type="Gene3D" id="3.90.650.10">
    <property type="entry name" value="PurM-like C-terminal domain"/>
    <property type="match status" value="1"/>
</dbReference>
<dbReference type="Gene3D" id="3.30.1330.10">
    <property type="entry name" value="PurM-like, N-terminal domain"/>
    <property type="match status" value="1"/>
</dbReference>
<dbReference type="HAMAP" id="MF_00741">
    <property type="entry name" value="AIRS"/>
    <property type="match status" value="1"/>
</dbReference>
<dbReference type="InterPro" id="IPR010918">
    <property type="entry name" value="PurM-like_C_dom"/>
</dbReference>
<dbReference type="InterPro" id="IPR036676">
    <property type="entry name" value="PurM-like_C_sf"/>
</dbReference>
<dbReference type="InterPro" id="IPR016188">
    <property type="entry name" value="PurM-like_N"/>
</dbReference>
<dbReference type="InterPro" id="IPR036921">
    <property type="entry name" value="PurM-like_N_sf"/>
</dbReference>
<dbReference type="InterPro" id="IPR004733">
    <property type="entry name" value="PurM_cligase"/>
</dbReference>
<dbReference type="NCBIfam" id="TIGR00878">
    <property type="entry name" value="purM"/>
    <property type="match status" value="1"/>
</dbReference>
<dbReference type="PANTHER" id="PTHR10520:SF12">
    <property type="entry name" value="TRIFUNCTIONAL PURINE BIOSYNTHETIC PROTEIN ADENOSINE-3"/>
    <property type="match status" value="1"/>
</dbReference>
<dbReference type="PANTHER" id="PTHR10520">
    <property type="entry name" value="TRIFUNCTIONAL PURINE BIOSYNTHETIC PROTEIN ADENOSINE-3-RELATED"/>
    <property type="match status" value="1"/>
</dbReference>
<dbReference type="Pfam" id="PF00586">
    <property type="entry name" value="AIRS"/>
    <property type="match status" value="1"/>
</dbReference>
<dbReference type="Pfam" id="PF02769">
    <property type="entry name" value="AIRS_C"/>
    <property type="match status" value="1"/>
</dbReference>
<dbReference type="SUPFAM" id="SSF56042">
    <property type="entry name" value="PurM C-terminal domain-like"/>
    <property type="match status" value="1"/>
</dbReference>
<dbReference type="SUPFAM" id="SSF55326">
    <property type="entry name" value="PurM N-terminal domain-like"/>
    <property type="match status" value="1"/>
</dbReference>